<gene>
    <name evidence="1" type="primary">pnp</name>
    <name type="ordered locus">ECP_3252</name>
</gene>
<sequence>MLNPIVRKFQYGQHTVTLETGMMARQATAAVMVSMDDTAVFVTVVGQKKAKPGQDFFPLTVNYQERTYAAGRIPGSFFRREGRPSEGETLIARLIDRPIRPLFPEGFVNEVQVIATVVSVNPQVNPDIVAMIGASAALSLSGIPFNGPIGAARVGYINDQYVLNPTQDELKESKLDLVVAGTEAAVLMVESEAELLSEDQMLGAVVFGHEQQQVVIQNINELVKEAGKPRWDWQPEPVNEALNARVAALAEARLSDAYRITDKQERYAQVDVIKSETIATLLAEDETLDENELGEILHAIEKNVVRSRVLAGEPRIDGREKDMIRGLDVRTGVLPRTHGSALFTRGETQALVTATLGTARDAQVLDELMGERTDTFLFHYNFPPYSVGETGMVGSPKRREIGHGRLAKRGVLAVMPDMDKFPYTVRVVSEITESNGSSSMASVCGASLALMDAGVPIKAAVAGIAMGLVKEGDNYVVLSDILGDEDHLGDMDFKVAGSRDGISALQMDIKIEGITKEIMQVALNQAKGARLHILGVMEQAINAPRGDISEFAPRIHTIKINPDKIKDVIGKGGSVIRALTEETGTTIEIEDDGTVKIAATDGEKAKHAIRRIEEITAEIEVGRVYNGKVTRIVDFGAFVAIGGGKEGLVHISQIADKRVEKVTDYLQMGQEVPVKVLEVDRQGRIRLSIKEATEQSQPAAAPEAPAAEQGE</sequence>
<feature type="chain" id="PRO_0000329644" description="Polyribonucleotide nucleotidyltransferase">
    <location>
        <begin position="1"/>
        <end position="711"/>
    </location>
</feature>
<feature type="domain" description="KH" evidence="1">
    <location>
        <begin position="553"/>
        <end position="612"/>
    </location>
</feature>
<feature type="domain" description="S1 motif" evidence="1">
    <location>
        <begin position="622"/>
        <end position="690"/>
    </location>
</feature>
<feature type="region of interest" description="Disordered" evidence="2">
    <location>
        <begin position="689"/>
        <end position="711"/>
    </location>
</feature>
<feature type="compositionally biased region" description="Low complexity" evidence="2">
    <location>
        <begin position="694"/>
        <end position="711"/>
    </location>
</feature>
<feature type="binding site" evidence="1">
    <location>
        <position position="486"/>
    </location>
    <ligand>
        <name>Mg(2+)</name>
        <dbReference type="ChEBI" id="CHEBI:18420"/>
    </ligand>
</feature>
<feature type="binding site" evidence="1">
    <location>
        <position position="492"/>
    </location>
    <ligand>
        <name>Mg(2+)</name>
        <dbReference type="ChEBI" id="CHEBI:18420"/>
    </ligand>
</feature>
<evidence type="ECO:0000255" key="1">
    <source>
        <dbReference type="HAMAP-Rule" id="MF_01595"/>
    </source>
</evidence>
<evidence type="ECO:0000256" key="2">
    <source>
        <dbReference type="SAM" id="MobiDB-lite"/>
    </source>
</evidence>
<evidence type="ECO:0000305" key="3"/>
<comment type="function">
    <text evidence="1">Involved in mRNA degradation. Catalyzes the phosphorolysis of single-stranded polyribonucleotides processively in the 3'- to 5'-direction.</text>
</comment>
<comment type="catalytic activity">
    <reaction evidence="1">
        <text>RNA(n+1) + phosphate = RNA(n) + a ribonucleoside 5'-diphosphate</text>
        <dbReference type="Rhea" id="RHEA:22096"/>
        <dbReference type="Rhea" id="RHEA-COMP:14527"/>
        <dbReference type="Rhea" id="RHEA-COMP:17342"/>
        <dbReference type="ChEBI" id="CHEBI:43474"/>
        <dbReference type="ChEBI" id="CHEBI:57930"/>
        <dbReference type="ChEBI" id="CHEBI:140395"/>
        <dbReference type="EC" id="2.7.7.8"/>
    </reaction>
</comment>
<comment type="cofactor">
    <cofactor evidence="1">
        <name>Mg(2+)</name>
        <dbReference type="ChEBI" id="CHEBI:18420"/>
    </cofactor>
</comment>
<comment type="subunit">
    <text evidence="1">Component of the RNA degradosome, which is a multiprotein complex involved in RNA processing and mRNA degradation.</text>
</comment>
<comment type="subcellular location">
    <subcellularLocation>
        <location evidence="1">Cytoplasm</location>
    </subcellularLocation>
</comment>
<comment type="similarity">
    <text evidence="1">Belongs to the polyribonucleotide nucleotidyltransferase family.</text>
</comment>
<comment type="sequence caution" evidence="3">
    <conflict type="erroneous initiation">
        <sequence resource="EMBL-CDS" id="ABG71234"/>
    </conflict>
</comment>
<proteinExistence type="inferred from homology"/>
<reference key="1">
    <citation type="journal article" date="2006" name="Mol. Microbiol.">
        <title>Role of pathogenicity island-associated integrases in the genome plasticity of uropathogenic Escherichia coli strain 536.</title>
        <authorList>
            <person name="Hochhut B."/>
            <person name="Wilde C."/>
            <person name="Balling G."/>
            <person name="Middendorf B."/>
            <person name="Dobrindt U."/>
            <person name="Brzuszkiewicz E."/>
            <person name="Gottschalk G."/>
            <person name="Carniel E."/>
            <person name="Hacker J."/>
        </authorList>
    </citation>
    <scope>NUCLEOTIDE SEQUENCE [LARGE SCALE GENOMIC DNA]</scope>
    <source>
        <strain>536 / UPEC</strain>
    </source>
</reference>
<organism>
    <name type="scientific">Escherichia coli O6:K15:H31 (strain 536 / UPEC)</name>
    <dbReference type="NCBI Taxonomy" id="362663"/>
    <lineage>
        <taxon>Bacteria</taxon>
        <taxon>Pseudomonadati</taxon>
        <taxon>Pseudomonadota</taxon>
        <taxon>Gammaproteobacteria</taxon>
        <taxon>Enterobacterales</taxon>
        <taxon>Enterobacteriaceae</taxon>
        <taxon>Escherichia</taxon>
    </lineage>
</organism>
<dbReference type="EC" id="2.7.7.8" evidence="1"/>
<dbReference type="EMBL" id="CP000247">
    <property type="protein sequence ID" value="ABG71234.1"/>
    <property type="status" value="ALT_INIT"/>
    <property type="molecule type" value="Genomic_DNA"/>
</dbReference>
<dbReference type="RefSeq" id="WP_001298330.1">
    <property type="nucleotide sequence ID" value="NC_008253.1"/>
</dbReference>
<dbReference type="SMR" id="Q0TCU5"/>
<dbReference type="KEGG" id="ecp:ECP_3252"/>
<dbReference type="HOGENOM" id="CLU_004217_2_2_6"/>
<dbReference type="Proteomes" id="UP000009182">
    <property type="component" value="Chromosome"/>
</dbReference>
<dbReference type="GO" id="GO:0005829">
    <property type="term" value="C:cytosol"/>
    <property type="evidence" value="ECO:0007669"/>
    <property type="project" value="TreeGrafter"/>
</dbReference>
<dbReference type="GO" id="GO:0000175">
    <property type="term" value="F:3'-5'-RNA exonuclease activity"/>
    <property type="evidence" value="ECO:0007669"/>
    <property type="project" value="TreeGrafter"/>
</dbReference>
<dbReference type="GO" id="GO:0000287">
    <property type="term" value="F:magnesium ion binding"/>
    <property type="evidence" value="ECO:0007669"/>
    <property type="project" value="UniProtKB-UniRule"/>
</dbReference>
<dbReference type="GO" id="GO:0004654">
    <property type="term" value="F:polyribonucleotide nucleotidyltransferase activity"/>
    <property type="evidence" value="ECO:0007669"/>
    <property type="project" value="UniProtKB-UniRule"/>
</dbReference>
<dbReference type="GO" id="GO:0003723">
    <property type="term" value="F:RNA binding"/>
    <property type="evidence" value="ECO:0007669"/>
    <property type="project" value="UniProtKB-UniRule"/>
</dbReference>
<dbReference type="GO" id="GO:0006402">
    <property type="term" value="P:mRNA catabolic process"/>
    <property type="evidence" value="ECO:0007669"/>
    <property type="project" value="UniProtKB-UniRule"/>
</dbReference>
<dbReference type="GO" id="GO:0006396">
    <property type="term" value="P:RNA processing"/>
    <property type="evidence" value="ECO:0007669"/>
    <property type="project" value="InterPro"/>
</dbReference>
<dbReference type="CDD" id="cd02393">
    <property type="entry name" value="KH-I_PNPase"/>
    <property type="match status" value="1"/>
</dbReference>
<dbReference type="CDD" id="cd11363">
    <property type="entry name" value="RNase_PH_PNPase_1"/>
    <property type="match status" value="1"/>
</dbReference>
<dbReference type="CDD" id="cd11364">
    <property type="entry name" value="RNase_PH_PNPase_2"/>
    <property type="match status" value="1"/>
</dbReference>
<dbReference type="CDD" id="cd04472">
    <property type="entry name" value="S1_PNPase"/>
    <property type="match status" value="1"/>
</dbReference>
<dbReference type="FunFam" id="2.40.50.140:FF:000023">
    <property type="entry name" value="Polyribonucleotide nucleotidyltransferase"/>
    <property type="match status" value="1"/>
</dbReference>
<dbReference type="FunFam" id="3.30.1370.10:FF:000001">
    <property type="entry name" value="Polyribonucleotide nucleotidyltransferase"/>
    <property type="match status" value="1"/>
</dbReference>
<dbReference type="FunFam" id="3.30.230.70:FF:000001">
    <property type="entry name" value="Polyribonucleotide nucleotidyltransferase"/>
    <property type="match status" value="1"/>
</dbReference>
<dbReference type="FunFam" id="3.30.230.70:FF:000002">
    <property type="entry name" value="Polyribonucleotide nucleotidyltransferase"/>
    <property type="match status" value="1"/>
</dbReference>
<dbReference type="Gene3D" id="3.30.230.70">
    <property type="entry name" value="GHMP Kinase, N-terminal domain"/>
    <property type="match status" value="2"/>
</dbReference>
<dbReference type="Gene3D" id="3.30.1370.10">
    <property type="entry name" value="K Homology domain, type 1"/>
    <property type="match status" value="1"/>
</dbReference>
<dbReference type="Gene3D" id="2.40.50.140">
    <property type="entry name" value="Nucleic acid-binding proteins"/>
    <property type="match status" value="1"/>
</dbReference>
<dbReference type="HAMAP" id="MF_01595">
    <property type="entry name" value="PNPase"/>
    <property type="match status" value="1"/>
</dbReference>
<dbReference type="InterPro" id="IPR001247">
    <property type="entry name" value="ExoRNase_PH_dom1"/>
</dbReference>
<dbReference type="InterPro" id="IPR015847">
    <property type="entry name" value="ExoRNase_PH_dom2"/>
</dbReference>
<dbReference type="InterPro" id="IPR036345">
    <property type="entry name" value="ExoRNase_PH_dom2_sf"/>
</dbReference>
<dbReference type="InterPro" id="IPR004087">
    <property type="entry name" value="KH_dom"/>
</dbReference>
<dbReference type="InterPro" id="IPR004088">
    <property type="entry name" value="KH_dom_type_1"/>
</dbReference>
<dbReference type="InterPro" id="IPR036612">
    <property type="entry name" value="KH_dom_type_1_sf"/>
</dbReference>
<dbReference type="InterPro" id="IPR012340">
    <property type="entry name" value="NA-bd_OB-fold"/>
</dbReference>
<dbReference type="InterPro" id="IPR012162">
    <property type="entry name" value="PNPase"/>
</dbReference>
<dbReference type="InterPro" id="IPR027408">
    <property type="entry name" value="PNPase/RNase_PH_dom_sf"/>
</dbReference>
<dbReference type="InterPro" id="IPR015848">
    <property type="entry name" value="PNPase_PH_RNA-bd_bac/org-type"/>
</dbReference>
<dbReference type="InterPro" id="IPR036456">
    <property type="entry name" value="PNPase_PH_RNA-bd_sf"/>
</dbReference>
<dbReference type="InterPro" id="IPR020568">
    <property type="entry name" value="Ribosomal_Su5_D2-typ_SF"/>
</dbReference>
<dbReference type="InterPro" id="IPR003029">
    <property type="entry name" value="S1_domain"/>
</dbReference>
<dbReference type="NCBIfam" id="TIGR03591">
    <property type="entry name" value="polynuc_phos"/>
    <property type="match status" value="1"/>
</dbReference>
<dbReference type="NCBIfam" id="NF008805">
    <property type="entry name" value="PRK11824.1"/>
    <property type="match status" value="1"/>
</dbReference>
<dbReference type="PANTHER" id="PTHR11252">
    <property type="entry name" value="POLYRIBONUCLEOTIDE NUCLEOTIDYLTRANSFERASE"/>
    <property type="match status" value="1"/>
</dbReference>
<dbReference type="PANTHER" id="PTHR11252:SF0">
    <property type="entry name" value="POLYRIBONUCLEOTIDE NUCLEOTIDYLTRANSFERASE 1, MITOCHONDRIAL"/>
    <property type="match status" value="1"/>
</dbReference>
<dbReference type="Pfam" id="PF00013">
    <property type="entry name" value="KH_1"/>
    <property type="match status" value="1"/>
</dbReference>
<dbReference type="Pfam" id="PF03726">
    <property type="entry name" value="PNPase"/>
    <property type="match status" value="1"/>
</dbReference>
<dbReference type="Pfam" id="PF01138">
    <property type="entry name" value="RNase_PH"/>
    <property type="match status" value="2"/>
</dbReference>
<dbReference type="Pfam" id="PF03725">
    <property type="entry name" value="RNase_PH_C"/>
    <property type="match status" value="2"/>
</dbReference>
<dbReference type="Pfam" id="PF00575">
    <property type="entry name" value="S1"/>
    <property type="match status" value="1"/>
</dbReference>
<dbReference type="PIRSF" id="PIRSF005499">
    <property type="entry name" value="PNPase"/>
    <property type="match status" value="1"/>
</dbReference>
<dbReference type="SMART" id="SM00322">
    <property type="entry name" value="KH"/>
    <property type="match status" value="1"/>
</dbReference>
<dbReference type="SMART" id="SM00316">
    <property type="entry name" value="S1"/>
    <property type="match status" value="1"/>
</dbReference>
<dbReference type="SUPFAM" id="SSF54791">
    <property type="entry name" value="Eukaryotic type KH-domain (KH-domain type I)"/>
    <property type="match status" value="1"/>
</dbReference>
<dbReference type="SUPFAM" id="SSF50249">
    <property type="entry name" value="Nucleic acid-binding proteins"/>
    <property type="match status" value="1"/>
</dbReference>
<dbReference type="SUPFAM" id="SSF46915">
    <property type="entry name" value="Polynucleotide phosphorylase/guanosine pentaphosphate synthase (PNPase/GPSI), domain 3"/>
    <property type="match status" value="1"/>
</dbReference>
<dbReference type="SUPFAM" id="SSF55666">
    <property type="entry name" value="Ribonuclease PH domain 2-like"/>
    <property type="match status" value="2"/>
</dbReference>
<dbReference type="SUPFAM" id="SSF54211">
    <property type="entry name" value="Ribosomal protein S5 domain 2-like"/>
    <property type="match status" value="2"/>
</dbReference>
<dbReference type="PROSITE" id="PS50084">
    <property type="entry name" value="KH_TYPE_1"/>
    <property type="match status" value="1"/>
</dbReference>
<dbReference type="PROSITE" id="PS50126">
    <property type="entry name" value="S1"/>
    <property type="match status" value="1"/>
</dbReference>
<name>PNP_ECOL5</name>
<accession>Q0TCU5</accession>
<protein>
    <recommendedName>
        <fullName evidence="1">Polyribonucleotide nucleotidyltransferase</fullName>
        <ecNumber evidence="1">2.7.7.8</ecNumber>
    </recommendedName>
    <alternativeName>
        <fullName evidence="1">Polynucleotide phosphorylase</fullName>
        <shortName evidence="1">PNPase</shortName>
    </alternativeName>
</protein>
<keyword id="KW-0963">Cytoplasm</keyword>
<keyword id="KW-0460">Magnesium</keyword>
<keyword id="KW-0479">Metal-binding</keyword>
<keyword id="KW-0548">Nucleotidyltransferase</keyword>
<keyword id="KW-0694">RNA-binding</keyword>
<keyword id="KW-0808">Transferase</keyword>